<proteinExistence type="inferred from homology"/>
<comment type="function">
    <text evidence="1">Component of the NOP7 complex, which is required for maturation of the 25S and 5.8S ribosomal RNAs and formation of the 60S ribosome.</text>
</comment>
<comment type="subunit">
    <text evidence="1">Component of the NOP7 complex, composed of ERB1, NOP7 and YTM1. The complex is held together by ERB1, which interacts with NOP7 via its N-terminal domain and with YTM1 via a high-affinity interaction between the seven-bladed beta-propeller domains of the 2 proteins. The NOP7 complex associates with the 66S pre-ribosome. Interacts (via UBL domain) with MDN1 (via VWFA/MIDAS domain).</text>
</comment>
<comment type="subcellular location">
    <subcellularLocation>
        <location evidence="1">Nucleus</location>
        <location evidence="1">Nucleolus</location>
    </subcellularLocation>
    <subcellularLocation>
        <location evidence="1">Nucleus</location>
        <location evidence="1">Nucleoplasm</location>
    </subcellularLocation>
</comment>
<comment type="similarity">
    <text evidence="1">Belongs to the WD repeat WDR12/YTM1 family.</text>
</comment>
<accession>Q2GXT0</accession>
<organism>
    <name type="scientific">Chaetomium globosum (strain ATCC 6205 / CBS 148.51 / DSM 1962 / NBRC 6347 / NRRL 1970)</name>
    <name type="common">Soil fungus</name>
    <dbReference type="NCBI Taxonomy" id="306901"/>
    <lineage>
        <taxon>Eukaryota</taxon>
        <taxon>Fungi</taxon>
        <taxon>Dikarya</taxon>
        <taxon>Ascomycota</taxon>
        <taxon>Pezizomycotina</taxon>
        <taxon>Sordariomycetes</taxon>
        <taxon>Sordariomycetidae</taxon>
        <taxon>Sordariales</taxon>
        <taxon>Chaetomiaceae</taxon>
        <taxon>Chaetomium</taxon>
    </lineage>
</organism>
<dbReference type="EMBL" id="CH408033">
    <property type="protein sequence ID" value="EAQ85971.1"/>
    <property type="molecule type" value="Genomic_DNA"/>
</dbReference>
<dbReference type="RefSeq" id="XP_001224880.1">
    <property type="nucleotide sequence ID" value="XM_001224879.1"/>
</dbReference>
<dbReference type="SMR" id="Q2GXT0"/>
<dbReference type="FunCoup" id="Q2GXT0">
    <property type="interactions" value="798"/>
</dbReference>
<dbReference type="STRING" id="306901.Q2GXT0"/>
<dbReference type="GeneID" id="4393224"/>
<dbReference type="VEuPathDB" id="FungiDB:CHGG_07224"/>
<dbReference type="eggNOG" id="KOG0313">
    <property type="taxonomic scope" value="Eukaryota"/>
</dbReference>
<dbReference type="HOGENOM" id="CLU_000288_57_0_1"/>
<dbReference type="InParanoid" id="Q2GXT0"/>
<dbReference type="OMA" id="DHKYVEF"/>
<dbReference type="OrthoDB" id="10251381at2759"/>
<dbReference type="Proteomes" id="UP000001056">
    <property type="component" value="Unassembled WGS sequence"/>
</dbReference>
<dbReference type="GO" id="GO:0005654">
    <property type="term" value="C:nucleoplasm"/>
    <property type="evidence" value="ECO:0007669"/>
    <property type="project" value="UniProtKB-SubCell"/>
</dbReference>
<dbReference type="GO" id="GO:0070545">
    <property type="term" value="C:PeBoW complex"/>
    <property type="evidence" value="ECO:0007669"/>
    <property type="project" value="EnsemblFungi"/>
</dbReference>
<dbReference type="GO" id="GO:0030687">
    <property type="term" value="C:preribosome, large subunit precursor"/>
    <property type="evidence" value="ECO:0007669"/>
    <property type="project" value="UniProtKB-UniRule"/>
</dbReference>
<dbReference type="GO" id="GO:0043021">
    <property type="term" value="F:ribonucleoprotein complex binding"/>
    <property type="evidence" value="ECO:0007669"/>
    <property type="project" value="UniProtKB-UniRule"/>
</dbReference>
<dbReference type="GO" id="GO:0051276">
    <property type="term" value="P:chromosome organization"/>
    <property type="evidence" value="ECO:0007669"/>
    <property type="project" value="EnsemblFungi"/>
</dbReference>
<dbReference type="GO" id="GO:0000466">
    <property type="term" value="P:maturation of 5.8S rRNA from tricistronic rRNA transcript (SSU-rRNA, 5.8S rRNA, LSU-rRNA)"/>
    <property type="evidence" value="ECO:0007669"/>
    <property type="project" value="UniProtKB-UniRule"/>
</dbReference>
<dbReference type="GO" id="GO:0000463">
    <property type="term" value="P:maturation of LSU-rRNA from tricistronic rRNA transcript (SSU-rRNA, 5.8S rRNA, LSU-rRNA)"/>
    <property type="evidence" value="ECO:0007669"/>
    <property type="project" value="UniProtKB-UniRule"/>
</dbReference>
<dbReference type="GO" id="GO:0110136">
    <property type="term" value="P:protein-RNA complex remodeling"/>
    <property type="evidence" value="ECO:0007669"/>
    <property type="project" value="EnsemblFungi"/>
</dbReference>
<dbReference type="FunFam" id="2.130.10.10:FF:000593">
    <property type="entry name" value="Ribosome biogenesis protein ytm1"/>
    <property type="match status" value="1"/>
</dbReference>
<dbReference type="Gene3D" id="2.130.10.10">
    <property type="entry name" value="YVTN repeat-like/Quinoprotein amine dehydrogenase"/>
    <property type="match status" value="1"/>
</dbReference>
<dbReference type="HAMAP" id="MF_03029">
    <property type="entry name" value="WDR12"/>
    <property type="match status" value="1"/>
</dbReference>
<dbReference type="InterPro" id="IPR020472">
    <property type="entry name" value="G-protein_beta_WD-40_rep"/>
</dbReference>
<dbReference type="InterPro" id="IPR012972">
    <property type="entry name" value="NLE"/>
</dbReference>
<dbReference type="InterPro" id="IPR015943">
    <property type="entry name" value="WD40/YVTN_repeat-like_dom_sf"/>
</dbReference>
<dbReference type="InterPro" id="IPR019775">
    <property type="entry name" value="WD40_repeat_CS"/>
</dbReference>
<dbReference type="InterPro" id="IPR036322">
    <property type="entry name" value="WD40_repeat_dom_sf"/>
</dbReference>
<dbReference type="InterPro" id="IPR001680">
    <property type="entry name" value="WD40_rpt"/>
</dbReference>
<dbReference type="InterPro" id="IPR028599">
    <property type="entry name" value="WDR12/Ytm1"/>
</dbReference>
<dbReference type="PANTHER" id="PTHR19855:SF11">
    <property type="entry name" value="RIBOSOME BIOGENESIS PROTEIN WDR12"/>
    <property type="match status" value="1"/>
</dbReference>
<dbReference type="PANTHER" id="PTHR19855">
    <property type="entry name" value="WD40 REPEAT PROTEIN 12, 37"/>
    <property type="match status" value="1"/>
</dbReference>
<dbReference type="Pfam" id="PF08154">
    <property type="entry name" value="NLE"/>
    <property type="match status" value="1"/>
</dbReference>
<dbReference type="Pfam" id="PF00400">
    <property type="entry name" value="WD40"/>
    <property type="match status" value="4"/>
</dbReference>
<dbReference type="PRINTS" id="PR00320">
    <property type="entry name" value="GPROTEINBRPT"/>
</dbReference>
<dbReference type="SMART" id="SM00320">
    <property type="entry name" value="WD40"/>
    <property type="match status" value="6"/>
</dbReference>
<dbReference type="SUPFAM" id="SSF50978">
    <property type="entry name" value="WD40 repeat-like"/>
    <property type="match status" value="1"/>
</dbReference>
<dbReference type="PROSITE" id="PS00678">
    <property type="entry name" value="WD_REPEATS_1"/>
    <property type="match status" value="2"/>
</dbReference>
<dbReference type="PROSITE" id="PS50082">
    <property type="entry name" value="WD_REPEATS_2"/>
    <property type="match status" value="3"/>
</dbReference>
<dbReference type="PROSITE" id="PS50294">
    <property type="entry name" value="WD_REPEATS_REGION"/>
    <property type="match status" value="1"/>
</dbReference>
<evidence type="ECO:0000255" key="1">
    <source>
        <dbReference type="HAMAP-Rule" id="MF_03029"/>
    </source>
</evidence>
<reference key="1">
    <citation type="journal article" date="2015" name="Genome Announc.">
        <title>Draft genome sequence of the cellulolytic fungus Chaetomium globosum.</title>
        <authorList>
            <person name="Cuomo C.A."/>
            <person name="Untereiner W.A."/>
            <person name="Ma L.-J."/>
            <person name="Grabherr M."/>
            <person name="Birren B.W."/>
        </authorList>
    </citation>
    <scope>NUCLEOTIDE SEQUENCE [LARGE SCALE GENOMIC DNA]</scope>
    <source>
        <strain>ATCC 6205 / CBS 148.51 / DSM 1962 / NBRC 6347 / NRRL 1970</strain>
    </source>
</reference>
<sequence>MDEPMVDASGAQVKVTFTTTEADLQLPESKRQLLVPADIRRYGLSRVLNSESMLDTGSIPFDFLVNGSFLRTSLEDYLTNNGLSLESNLTLQYVRSLIPPVYEASFEHDDWVSAVDVLSASSPSGRWSGDNFQRGQDRILSASFDGLLRIWNASGQVIATSPSGSHGGHTASIKAAKFLTNSQLASAGMDRTVRVWKYTESDHFSGDLKPTLELYGHTGSIDSLEVDGASKRILTASADGSIGFWSTSKASAPEADSSLLPNAHTSKRRKVTTSVTAAQRGPLSLMPIHSAPASAAVFDPRDRTVAYSASQDHTLRTIDLTTSTVVTTHSTSHPLLSLCALPRGNSASPLLAAGTAARHITLVDPRASAATTSVMTLRGHANKPVGLCASPRNEYALVSGAHDGTCRVWDLRSVRPATQEEGGLGSVSEAVYVIEREGAKGGKKTVAGEGCKVFGVVWDAELGIVSGAEDKRVQINAGRDVVAE</sequence>
<feature type="chain" id="PRO_0000369583" description="Ribosome biogenesis protein YTM1">
    <location>
        <begin position="1"/>
        <end position="484"/>
    </location>
</feature>
<feature type="repeat" description="WD 1">
    <location>
        <begin position="122"/>
        <end position="161"/>
    </location>
</feature>
<feature type="repeat" description="WD 2">
    <location>
        <begin position="168"/>
        <end position="206"/>
    </location>
</feature>
<feature type="repeat" description="WD 3">
    <location>
        <begin position="216"/>
        <end position="255"/>
    </location>
</feature>
<feature type="repeat" description="WD 4">
    <location>
        <begin position="288"/>
        <end position="328"/>
    </location>
</feature>
<feature type="repeat" description="WD 5">
    <location>
        <begin position="330"/>
        <end position="373"/>
    </location>
</feature>
<feature type="repeat" description="WD 6">
    <location>
        <begin position="379"/>
        <end position="419"/>
    </location>
</feature>
<feature type="repeat" description="WD 7">
    <location>
        <begin position="448"/>
        <end position="484"/>
    </location>
</feature>
<feature type="region of interest" description="Ubiquitin-like (UBL) domain" evidence="1">
    <location>
        <begin position="13"/>
        <end position="95"/>
    </location>
</feature>
<protein>
    <recommendedName>
        <fullName evidence="1">Ribosome biogenesis protein YTM1</fullName>
    </recommendedName>
</protein>
<name>YTM1_CHAGB</name>
<keyword id="KW-0539">Nucleus</keyword>
<keyword id="KW-1185">Reference proteome</keyword>
<keyword id="KW-0677">Repeat</keyword>
<keyword id="KW-0690">Ribosome biogenesis</keyword>
<keyword id="KW-0698">rRNA processing</keyword>
<keyword id="KW-0853">WD repeat</keyword>
<gene>
    <name evidence="1" type="primary">YTM1</name>
    <name type="ORF">CHGG_07224</name>
</gene>